<organism>
    <name type="scientific">Stichodactyla helianthus</name>
    <name type="common">Sun anemone</name>
    <name type="synonym">Stoichactis helianthus</name>
    <dbReference type="NCBI Taxonomy" id="6123"/>
    <lineage>
        <taxon>Eukaryota</taxon>
        <taxon>Metazoa</taxon>
        <taxon>Cnidaria</taxon>
        <taxon>Anthozoa</taxon>
        <taxon>Hexacorallia</taxon>
        <taxon>Actiniaria</taxon>
        <taxon>Stichodactylidae</taxon>
        <taxon>Stichodactyla</taxon>
    </lineage>
</organism>
<sequence>ALAGTIIAGASLTFQVLDKVLEELGKVSRKIAVGIDNESGGTWTALNAYFRSGTTDVILPEFVPNTKALLYSGRKDTGPVATGAVAAFAYYMSSGNTLGVMFSVPFDYNWYSNWWDVKIYSGKRRADQGMYEDLYYGNPYRGDNGWHEKNLGYGLRMKGIMTSAGEAKMQIKISR</sequence>
<protein>
    <recommendedName>
        <fullName evidence="18">DELTA-stichotoxin-She4b</fullName>
        <shortName evidence="18">DELTA-SHTX-She4b</shortName>
    </recommendedName>
    <alternativeName>
        <fullName evidence="19">Cytolysin III</fullName>
    </alternativeName>
    <alternativeName>
        <fullName evidence="14">Sticholysin II</fullName>
        <shortName evidence="13 15">St II</shortName>
        <shortName evidence="14">St-II</shortName>
        <shortName>StII</shortName>
        <shortName evidence="16 17">StnII</shortName>
    </alternativeName>
    <alternativeName>
        <fullName evidence="21">Sticholysin-2</fullName>
        <shortName evidence="20">STCH2</shortName>
    </alternativeName>
</protein>
<evidence type="ECO:0000250" key="1">
    <source>
        <dbReference type="UniProtKB" id="B9W5G6"/>
    </source>
</evidence>
<evidence type="ECO:0000250" key="2">
    <source>
        <dbReference type="UniProtKB" id="P61914"/>
    </source>
</evidence>
<evidence type="ECO:0000269" key="3">
    <source>
    </source>
</evidence>
<evidence type="ECO:0000269" key="4">
    <source>
    </source>
</evidence>
<evidence type="ECO:0000269" key="5">
    <source>
    </source>
</evidence>
<evidence type="ECO:0000269" key="6">
    <source>
    </source>
</evidence>
<evidence type="ECO:0000269" key="7">
    <source>
    </source>
</evidence>
<evidence type="ECO:0000269" key="8">
    <source>
    </source>
</evidence>
<evidence type="ECO:0000269" key="9">
    <source>
    </source>
</evidence>
<evidence type="ECO:0000269" key="10">
    <source>
    </source>
</evidence>
<evidence type="ECO:0000269" key="11">
    <source>
    </source>
</evidence>
<evidence type="ECO:0000269" key="12">
    <source>
    </source>
</evidence>
<evidence type="ECO:0000303" key="13">
    <source>
    </source>
</evidence>
<evidence type="ECO:0000303" key="14">
    <source>
    </source>
</evidence>
<evidence type="ECO:0000303" key="15">
    <source>
    </source>
</evidence>
<evidence type="ECO:0000303" key="16">
    <source>
    </source>
</evidence>
<evidence type="ECO:0000303" key="17">
    <source>
    </source>
</evidence>
<evidence type="ECO:0000303" key="18">
    <source>
    </source>
</evidence>
<evidence type="ECO:0000303" key="19">
    <source>
    </source>
</evidence>
<evidence type="ECO:0000303" key="20">
    <source ref="3"/>
</evidence>
<evidence type="ECO:0000305" key="21"/>
<evidence type="ECO:0000305" key="22">
    <source>
    </source>
</evidence>
<evidence type="ECO:0000312" key="23">
    <source>
        <dbReference type="PDB" id="1GWY"/>
    </source>
</evidence>
<evidence type="ECO:0000312" key="24">
    <source>
        <dbReference type="PDB" id="1O71"/>
    </source>
</evidence>
<evidence type="ECO:0000312" key="25">
    <source>
        <dbReference type="PDB" id="1O72"/>
    </source>
</evidence>
<evidence type="ECO:0007829" key="26">
    <source>
        <dbReference type="PDB" id="1GWY"/>
    </source>
</evidence>
<evidence type="ECO:0007829" key="27">
    <source>
        <dbReference type="PDB" id="1O71"/>
    </source>
</evidence>
<evidence type="ECO:0007829" key="28">
    <source>
        <dbReference type="PDB" id="2L38"/>
    </source>
</evidence>
<feature type="chain" id="PRO_0000221538" description="DELTA-stichotoxin-She4b" evidence="4 12">
    <location>
        <begin position="1"/>
        <end position="175"/>
    </location>
</feature>
<feature type="region of interest" description="Plays an important role in the hemolytic activity" evidence="8">
    <location>
        <begin position="1"/>
        <end position="10"/>
    </location>
</feature>
<feature type="region of interest" description="N-terminal region" evidence="2">
    <location>
        <begin position="9"/>
        <end position="28"/>
    </location>
</feature>
<feature type="region of interest" description="Trp-rich region, which is important for the binding to lipid membrane" evidence="2">
    <location>
        <begin position="103"/>
        <end position="118"/>
    </location>
</feature>
<feature type="short sequence motif" description="Cell attachment site, crucial for protein stability" evidence="11">
    <location>
        <begin position="141"/>
        <end position="143"/>
    </location>
</feature>
<feature type="binding site" evidence="6">
    <location>
        <position position="52"/>
    </location>
    <ligand>
        <name>phosphocholine</name>
        <dbReference type="ChEBI" id="CHEBI:295975"/>
    </ligand>
</feature>
<feature type="binding site" evidence="6">
    <location>
        <position position="85"/>
    </location>
    <ligand>
        <name>phosphocholine</name>
        <dbReference type="ChEBI" id="CHEBI:295975"/>
    </ligand>
</feature>
<feature type="binding site" evidence="6">
    <location>
        <position position="103"/>
    </location>
    <ligand>
        <name>phosphocholine</name>
        <dbReference type="ChEBI" id="CHEBI:295975"/>
    </ligand>
</feature>
<feature type="binding site" evidence="6">
    <location>
        <position position="105"/>
    </location>
    <ligand>
        <name>phosphocholine</name>
        <dbReference type="ChEBI" id="CHEBI:295975"/>
    </ligand>
</feature>
<feature type="binding site" evidence="6">
    <location>
        <position position="131"/>
    </location>
    <ligand>
        <name>phosphocholine</name>
        <dbReference type="ChEBI" id="CHEBI:295975"/>
    </ligand>
</feature>
<feature type="binding site" evidence="6">
    <location>
        <position position="135"/>
    </location>
    <ligand>
        <name>phosphocholine</name>
        <dbReference type="ChEBI" id="CHEBI:295975"/>
    </ligand>
</feature>
<feature type="binding site" evidence="6">
    <location>
        <position position="136"/>
    </location>
    <ligand>
        <name>phosphocholine</name>
        <dbReference type="ChEBI" id="CHEBI:295975"/>
    </ligand>
</feature>
<feature type="site" description="Important in the initial contact with the lipid membrane" evidence="2">
    <location>
        <position position="110"/>
    </location>
</feature>
<feature type="site" description="Important in the initial contact with the lipid membrane" evidence="2">
    <location>
        <position position="111"/>
    </location>
</feature>
<feature type="mutagenesis site" description="Reduction of hemolytic activity." evidence="7">
    <original>K</original>
    <variation>E</variation>
    <location>
        <position position="19"/>
    </location>
</feature>
<feature type="mutagenesis site" description="Reduction of hemolytic activity." evidence="7">
    <original>F</original>
    <variation>L</variation>
    <location>
        <position position="106"/>
    </location>
</feature>
<feature type="mutagenesis site" description="Reduction of hemolytic activity." evidence="7">
    <original>Y</original>
    <variation>N</variation>
    <location>
        <position position="111"/>
    </location>
</feature>
<feature type="mutagenesis site" description="Loss of solubility." evidence="11">
    <original>RGD</original>
    <variation>DGR</variation>
    <variation>EAQ</variation>
    <location>
        <begin position="141"/>
        <end position="143"/>
    </location>
</feature>
<feature type="mutagenesis site" description="Potent decrease in hemolysis. The mutant retains the ability to bind to a membrane, but its oligomerization behavior is altered." evidence="11">
    <original>G</original>
    <variation>A</variation>
    <location>
        <position position="142"/>
    </location>
</feature>
<feature type="strand" evidence="26">
    <location>
        <begin position="6"/>
        <end position="8"/>
    </location>
</feature>
<feature type="helix" evidence="26">
    <location>
        <begin position="9"/>
        <end position="11"/>
    </location>
</feature>
<feature type="helix" evidence="26">
    <location>
        <begin position="14"/>
        <end position="23"/>
    </location>
</feature>
<feature type="strand" evidence="26">
    <location>
        <begin position="28"/>
        <end position="41"/>
    </location>
</feature>
<feature type="strand" evidence="26">
    <location>
        <begin position="43"/>
        <end position="54"/>
    </location>
</feature>
<feature type="strand" evidence="26">
    <location>
        <begin position="61"/>
        <end position="63"/>
    </location>
</feature>
<feature type="strand" evidence="26">
    <location>
        <begin position="67"/>
        <end position="74"/>
    </location>
</feature>
<feature type="strand" evidence="26">
    <location>
        <begin position="77"/>
        <end position="79"/>
    </location>
</feature>
<feature type="strand" evidence="28">
    <location>
        <begin position="81"/>
        <end position="83"/>
    </location>
</feature>
<feature type="strand" evidence="26">
    <location>
        <begin position="84"/>
        <end position="92"/>
    </location>
</feature>
<feature type="strand" evidence="26">
    <location>
        <begin position="95"/>
        <end position="104"/>
    </location>
</feature>
<feature type="turn" evidence="27">
    <location>
        <begin position="108"/>
        <end position="110"/>
    </location>
</feature>
<feature type="strand" evidence="26">
    <location>
        <begin position="114"/>
        <end position="122"/>
    </location>
</feature>
<feature type="helix" evidence="26">
    <location>
        <begin position="128"/>
        <end position="135"/>
    </location>
</feature>
<feature type="strand" evidence="26">
    <location>
        <begin position="146"/>
        <end position="152"/>
    </location>
</feature>
<feature type="strand" evidence="26">
    <location>
        <begin position="155"/>
        <end position="161"/>
    </location>
</feature>
<feature type="strand" evidence="26">
    <location>
        <begin position="163"/>
        <end position="174"/>
    </location>
</feature>
<proteinExistence type="evidence at protein level"/>
<accession>P07845</accession>
<dbReference type="EMBL" id="AJ005038">
    <property type="protein sequence ID" value="CAC20912.1"/>
    <property type="molecule type" value="mRNA"/>
</dbReference>
<dbReference type="PDB" id="1GWY">
    <property type="method" value="X-ray"/>
    <property type="resolution" value="1.71 A"/>
    <property type="chains" value="A/B=1-175"/>
</dbReference>
<dbReference type="PDB" id="1O71">
    <property type="method" value="X-ray"/>
    <property type="resolution" value="2.26 A"/>
    <property type="chains" value="A/B=1-175"/>
</dbReference>
<dbReference type="PDB" id="1O72">
    <property type="method" value="X-ray"/>
    <property type="resolution" value="2.41 A"/>
    <property type="chains" value="A/B=1-175"/>
</dbReference>
<dbReference type="PDB" id="2L2B">
    <property type="method" value="NMR"/>
    <property type="chains" value="A=1-175"/>
</dbReference>
<dbReference type="PDB" id="2L38">
    <property type="method" value="NMR"/>
    <property type="chains" value="A=1-175"/>
</dbReference>
<dbReference type="PDBsum" id="1GWY"/>
<dbReference type="PDBsum" id="1O71"/>
<dbReference type="PDBsum" id="1O72"/>
<dbReference type="PDBsum" id="2L2B"/>
<dbReference type="PDBsum" id="2L38"/>
<dbReference type="BMRB" id="P07845"/>
<dbReference type="SMR" id="P07845"/>
<dbReference type="MINT" id="P07845"/>
<dbReference type="EvolutionaryTrace" id="P07845"/>
<dbReference type="GO" id="GO:0005576">
    <property type="term" value="C:extracellular region"/>
    <property type="evidence" value="ECO:0007669"/>
    <property type="project" value="UniProtKB-SubCell"/>
</dbReference>
<dbReference type="GO" id="GO:0042151">
    <property type="term" value="C:nematocyst"/>
    <property type="evidence" value="ECO:0007669"/>
    <property type="project" value="UniProtKB-SubCell"/>
</dbReference>
<dbReference type="GO" id="GO:0044218">
    <property type="term" value="C:other organism cell membrane"/>
    <property type="evidence" value="ECO:0007669"/>
    <property type="project" value="UniProtKB-KW"/>
</dbReference>
<dbReference type="GO" id="GO:0046930">
    <property type="term" value="C:pore complex"/>
    <property type="evidence" value="ECO:0007669"/>
    <property type="project" value="InterPro"/>
</dbReference>
<dbReference type="GO" id="GO:0015267">
    <property type="term" value="F:channel activity"/>
    <property type="evidence" value="ECO:0007669"/>
    <property type="project" value="InterPro"/>
</dbReference>
<dbReference type="GO" id="GO:0042802">
    <property type="term" value="F:identical protein binding"/>
    <property type="evidence" value="ECO:0000353"/>
    <property type="project" value="IntAct"/>
</dbReference>
<dbReference type="GO" id="GO:0090729">
    <property type="term" value="F:toxin activity"/>
    <property type="evidence" value="ECO:0007669"/>
    <property type="project" value="UniProtKB-KW"/>
</dbReference>
<dbReference type="GO" id="GO:0051715">
    <property type="term" value="P:cytolysis in another organism"/>
    <property type="evidence" value="ECO:0007669"/>
    <property type="project" value="InterPro"/>
</dbReference>
<dbReference type="GO" id="GO:0006812">
    <property type="term" value="P:monoatomic cation transport"/>
    <property type="evidence" value="ECO:0007669"/>
    <property type="project" value="InterPro"/>
</dbReference>
<dbReference type="GO" id="GO:0046931">
    <property type="term" value="P:pore complex assembly"/>
    <property type="evidence" value="ECO:0007669"/>
    <property type="project" value="InterPro"/>
</dbReference>
<dbReference type="FunFam" id="2.60.270.20:FF:000001">
    <property type="entry name" value="DELTA-actitoxin-Afr1a"/>
    <property type="match status" value="1"/>
</dbReference>
<dbReference type="Gene3D" id="2.60.270.20">
    <property type="entry name" value="Cytolysin/lectin"/>
    <property type="match status" value="1"/>
</dbReference>
<dbReference type="InterPro" id="IPR050677">
    <property type="entry name" value="Actinoporin_PFT"/>
</dbReference>
<dbReference type="InterPro" id="IPR009104">
    <property type="entry name" value="Anemon_actinoporin-like"/>
</dbReference>
<dbReference type="InterPro" id="IPR015926">
    <property type="entry name" value="Cytolysin/lectin"/>
</dbReference>
<dbReference type="PANTHER" id="PTHR40388">
    <property type="entry name" value="BRYOPORIN"/>
    <property type="match status" value="1"/>
</dbReference>
<dbReference type="PANTHER" id="PTHR40388:SF1">
    <property type="entry name" value="BRYOPORIN"/>
    <property type="match status" value="1"/>
</dbReference>
<dbReference type="Pfam" id="PF06369">
    <property type="entry name" value="Anemone_cytotox"/>
    <property type="match status" value="1"/>
</dbReference>
<dbReference type="SUPFAM" id="SSF63724">
    <property type="entry name" value="Cytolysin/lectin"/>
    <property type="match status" value="1"/>
</dbReference>
<reference key="1">
    <citation type="journal article" date="1983" name="J. Biol. Chem.">
        <title>Primary structure of Stoichactis helianthus cytolysin III.</title>
        <authorList>
            <person name="Blumenthal K.M."/>
            <person name="Kem W.R."/>
        </authorList>
    </citation>
    <scope>PROTEIN SEQUENCE</scope>
</reference>
<reference key="2">
    <citation type="journal article" date="2001" name="Toxicon">
        <title>Primary structure of two cytolysin isoforms from Stichodactyla helianthus differing in their hemolytic activity.</title>
        <authorList>
            <person name="Huerta V."/>
            <person name="Morera V."/>
            <person name="Guanche Y."/>
            <person name="Chinea G."/>
            <person name="Gonzalez L.J."/>
            <person name="Betancourt L."/>
            <person name="Martinez D."/>
            <person name="Alvarez C."/>
            <person name="Lanio M.E."/>
            <person name="Besada V."/>
        </authorList>
    </citation>
    <scope>PROTEIN SEQUENCE</scope>
    <scope>SEQUENCE REVISION</scope>
    <scope>MASS SPECTROMETRY</scope>
</reference>
<reference key="3">
    <citation type="submission" date="1998-03" db="EMBL/GenBank/DDBJ databases">
        <title>Cloning and expression of sticholysin II from sea anemone, Stichodactyla helianthus.</title>
        <authorList>
            <person name="de los Rios V."/>
            <person name="Onaderra M."/>
            <person name="Martinez del Pozo A."/>
            <person name="Mancheno J."/>
            <person name="Gavilanes J.G."/>
        </authorList>
    </citation>
    <scope>NUCLEOTIDE SEQUENCE [MRNA]</scope>
</reference>
<reference key="4">
    <citation type="journal article" date="2001" name="Toxicon">
        <title>Purification and characterization of two hemolysins from Stichodactyla helianthus.</title>
        <authorList>
            <person name="Lanio M.E."/>
            <person name="Morera V."/>
            <person name="Alvarez C."/>
            <person name="Tejuca M."/>
            <person name="Gomez T."/>
            <person name="Pazos F."/>
            <person name="Besada V."/>
            <person name="Martinez D."/>
            <person name="Huerta V."/>
            <person name="Padron G."/>
            <person name="Chavez M.A."/>
        </authorList>
    </citation>
    <scope>FUNCTION</scope>
</reference>
<reference key="5">
    <citation type="journal article" date="2001" name="Toxicon">
        <title>Properties of St I and St II, two isotoxins isolated from Stichodactyla helianthus: a comparison.</title>
        <authorList>
            <person name="Martinez D."/>
            <person name="Campos A.M."/>
            <person name="Pazos F."/>
            <person name="Alvarez C."/>
            <person name="Lanio M.E."/>
            <person name="Casallanovo F."/>
            <person name="Schreier S."/>
            <person name="Salinas R.K."/>
            <person name="Vergara C."/>
            <person name="Lissi E."/>
        </authorList>
    </citation>
    <scope>FUNCTION</scope>
</reference>
<reference key="6">
    <citation type="journal article" date="2004" name="FEBS Lett.">
        <title>Phenotypic selection and characterization of randomly produced non-haemolytic mutants of the toxic sea anemone protein sticholysin II.</title>
        <authorList>
            <person name="Alegre-Cebollada J."/>
            <person name="Lacadena V."/>
            <person name="Onaderra M."/>
            <person name="Mancheno J.M."/>
            <person name="Gavilanes J.G."/>
            <person name="del Pozo A.M."/>
        </authorList>
    </citation>
    <scope>MUTAGENESIS OF LYS-19; PHE-106 AND TYR-111</scope>
</reference>
<reference key="7">
    <citation type="journal article" date="2006" name="Biopolymers">
        <title>Model peptides mimic the structure and function of the N-terminus of the pore-forming toxin sticholysin II.</title>
        <authorList>
            <person name="Casallanovo F."/>
            <person name="de Oliveira F.J.F."/>
            <person name="de Souza F.C."/>
            <person name="Ros U."/>
            <person name="Martinez Y."/>
            <person name="Penton D."/>
            <person name="Tejuca M."/>
            <person name="Martinez D."/>
            <person name="Pazos F."/>
            <person name="Pertinhez T.A."/>
            <person name="Spisni A."/>
            <person name="Cilli E.M."/>
            <person name="Lanio M.E."/>
            <person name="Alvarez C."/>
            <person name="Schreier S."/>
        </authorList>
    </citation>
    <scope>REGION IMPORTANT FOR HEMOLYTIC ACTIVITY</scope>
</reference>
<reference key="8">
    <citation type="journal article" date="2007" name="Biophys. J.">
        <title>Infrared spectroscopy study on the conformational changes leading to pore formation of the toxin sticholysin II.</title>
        <authorList>
            <person name="Alegre-Cebollada J."/>
            <person name="Martinez del Pozo A."/>
            <person name="Gavilanes J.G."/>
            <person name="Goormaghtigh E."/>
        </authorList>
    </citation>
    <scope>SUBCELLULAR LOCATION</scope>
    <scope>PORE FORMATION</scope>
    <scope>ALPHA-HELICAL STRUCTURE</scope>
</reference>
<reference key="9">
    <citation type="journal article" date="2009" name="Toxicon">
        <title>Molecular mechanism of pore formation by actinoporins.</title>
        <authorList>
            <person name="Kristan K.C."/>
            <person name="Viero G."/>
            <person name="Dalla Serra M."/>
            <person name="Macek P."/>
            <person name="Anderluh G."/>
        </authorList>
    </citation>
    <scope>REVIEW</scope>
</reference>
<reference key="10">
    <citation type="journal article" date="2006" name="J. Exp. Zool. A Comp. Exp. Biol.">
        <title>Immunohistochemical targeting of sea anemone cytolysins on tentacles, mesenteric filaments and isolated nematocysts of Stichodactyla helianthus.</title>
        <authorList>
            <person name="Basulto A."/>
            <person name="Perez V.M."/>
            <person name="Noa Y."/>
            <person name="Varela C."/>
            <person name="Otero A.J."/>
            <person name="Pico M.C."/>
        </authorList>
    </citation>
    <scope>SUBUNIT</scope>
    <scope>TISSUE SPECIFICITY</scope>
</reference>
<reference key="11">
    <citation type="journal article" date="2014" name="FEBS J.">
        <title>The sea anemone actinoporin (Arg-Gly-Asp) conserved motif is involved in maintaining the competent oligomerization state of these pore-forming toxins.</title>
        <authorList>
            <person name="Garcia-Linares S."/>
            <person name="Richmond R."/>
            <person name="Garcia-Mayoral M.F."/>
            <person name="Bustamante N."/>
            <person name="Bruix M."/>
            <person name="Gavilanes J.G."/>
            <person name="Martinez-Del-Pozo A."/>
        </authorList>
    </citation>
    <scope>MOTIF</scope>
    <scope>MUTAGENESIS OF GLY-142 AND 141-ARG--ASP-143</scope>
</reference>
<reference key="12">
    <citation type="journal article" date="2012" name="Toxicon">
        <title>Development of a rational nomenclature for naming peptide and protein toxins from sea anemones.</title>
        <authorList>
            <person name="Oliveira J.S."/>
            <person name="Fuentes-Silva D."/>
            <person name="King G.F."/>
        </authorList>
    </citation>
    <scope>NOMENCLATURE</scope>
</reference>
<reference evidence="23 24 25" key="13">
    <citation type="journal article" date="2003" name="Structure">
        <title>Crystal and electron microscopy structures of sticholysin II actinoporin reveal insights into the mechanism of membrane pore formation.</title>
        <authorList>
            <person name="Mancheno J.M."/>
            <person name="Martin-Benito J."/>
            <person name="Martinez-Ripoll M."/>
            <person name="Gavilanes J.G."/>
            <person name="Hermoso J.A."/>
        </authorList>
    </citation>
    <scope>X-RAY CRYSTALLOGRAPHY (1.71 ANGSTROMS)</scope>
    <scope>PHOSPHOCHOLINE-BINDING SITES</scope>
    <scope>SUBUNIT</scope>
</reference>
<comment type="function">
    <text evidence="3 5">Pore-forming protein that forms cations-selective hydrophilic pores of around 1 nm and causes cardiac stimulation and cytolysis. Pore formation is a multi-step process that involves specific recognition of membrane sphingomyelin (but neither cholesterol nor phosphatidylcholine) using aromatic rich region and adjacent phosphocholine (POC) binding site, firm binding to the membrane (mainly driven by hydrophobic interactions) accompanied by the transfer of the N-terminal region to the lipid-water interface and finally pore formation after oligomerization of monomers. Cytolytic effects include red blood cells hemolysis, platelet aggregation and lysis, cytotoxic and cytostatic effects on fibroblasts. Lethality in mammals has been ascribed to severe vasospasm of coronary vessels, cardiac arrhythmia, and inotropic effects.</text>
</comment>
<comment type="subunit">
    <text evidence="1 22">Octamer or nonamer in membranes. Monomer in the soluble state (By similarity). Originally described as forming tetramer in the presence of a lipidic interface (Probable).</text>
</comment>
<comment type="interaction">
    <interactant intactId="EBI-9084009">
        <id>P07845</id>
    </interactant>
    <interactant intactId="EBI-9084009">
        <id>P07845</id>
        <label>-</label>
    </interactant>
    <organismsDiffer>false</organismsDiffer>
    <experiments>2</experiments>
</comment>
<comment type="subcellular location">
    <subcellularLocation>
        <location>Secreted</location>
    </subcellularLocation>
    <subcellularLocation>
        <location evidence="9">Nematocyst</location>
    </subcellularLocation>
    <subcellularLocation>
        <location evidence="10">Target cell membrane</location>
    </subcellularLocation>
    <text evidence="10">Forms an alpha-helical membrane channel in the prey.</text>
</comment>
<comment type="tissue specificity">
    <text evidence="9">Expressed in tentacles and mesenteric filaments.</text>
</comment>
<comment type="domain">
    <text evidence="2">Composed of a long N-terminal alpha-helix and a core region rich in beta-sheet structures. Before the pore formation, the alpha-helix binds the lipid membrane, partitions into the lipid-water interface and stabilizes the monomeric molecule on the membrane. Finally, it traverses the bilayer, thus forming the transmembrane pore.</text>
</comment>
<comment type="mass spectrometry"/>
<comment type="similarity">
    <text evidence="21">Belongs to the actinoporin family. Sea anemone subfamily.</text>
</comment>
<name>ACTP2_STIHL</name>
<keyword id="KW-0002">3D-structure</keyword>
<keyword id="KW-0204">Cytolysis</keyword>
<keyword id="KW-0903">Direct protein sequencing</keyword>
<keyword id="KW-0406">Ion transport</keyword>
<keyword id="KW-0472">Membrane</keyword>
<keyword id="KW-0166">Nematocyst</keyword>
<keyword id="KW-0964">Secreted</keyword>
<keyword id="KW-1052">Target cell membrane</keyword>
<keyword id="KW-1053">Target membrane</keyword>
<keyword id="KW-0800">Toxin</keyword>
<keyword id="KW-0812">Transmembrane</keyword>
<keyword id="KW-0813">Transport</keyword>